<organism>
    <name type="scientific">Staphylococcus aureus (strain JH1)</name>
    <dbReference type="NCBI Taxonomy" id="359787"/>
    <lineage>
        <taxon>Bacteria</taxon>
        <taxon>Bacillati</taxon>
        <taxon>Bacillota</taxon>
        <taxon>Bacilli</taxon>
        <taxon>Bacillales</taxon>
        <taxon>Staphylococcaceae</taxon>
        <taxon>Staphylococcus</taxon>
    </lineage>
</organism>
<reference key="1">
    <citation type="submission" date="2007-06" db="EMBL/GenBank/DDBJ databases">
        <title>Complete sequence of chromosome of Staphylococcus aureus subsp. aureus JH1.</title>
        <authorList>
            <consortium name="US DOE Joint Genome Institute"/>
            <person name="Copeland A."/>
            <person name="Lucas S."/>
            <person name="Lapidus A."/>
            <person name="Barry K."/>
            <person name="Detter J.C."/>
            <person name="Glavina del Rio T."/>
            <person name="Hammon N."/>
            <person name="Israni S."/>
            <person name="Dalin E."/>
            <person name="Tice H."/>
            <person name="Pitluck S."/>
            <person name="Chain P."/>
            <person name="Malfatti S."/>
            <person name="Shin M."/>
            <person name="Vergez L."/>
            <person name="Schmutz J."/>
            <person name="Larimer F."/>
            <person name="Land M."/>
            <person name="Hauser L."/>
            <person name="Kyrpides N."/>
            <person name="Ivanova N."/>
            <person name="Tomasz A."/>
            <person name="Richardson P."/>
        </authorList>
    </citation>
    <scope>NUCLEOTIDE SEQUENCE [LARGE SCALE GENOMIC DNA]</scope>
    <source>
        <strain>JH1</strain>
    </source>
</reference>
<proteinExistence type="inferred from homology"/>
<protein>
    <recommendedName>
        <fullName evidence="1">Enolase</fullName>
        <ecNumber evidence="1">4.2.1.11</ecNumber>
    </recommendedName>
    <alternativeName>
        <fullName evidence="1">2-phospho-D-glycerate hydro-lyase</fullName>
    </alternativeName>
    <alternativeName>
        <fullName evidence="1">2-phosphoglycerate dehydratase</fullName>
    </alternativeName>
</protein>
<comment type="function">
    <text evidence="1">Catalyzes the reversible conversion of 2-phosphoglycerate (2-PG) into phosphoenolpyruvate (PEP). It is essential for the degradation of carbohydrates via glycolysis.</text>
</comment>
<comment type="catalytic activity">
    <reaction evidence="1">
        <text>(2R)-2-phosphoglycerate = phosphoenolpyruvate + H2O</text>
        <dbReference type="Rhea" id="RHEA:10164"/>
        <dbReference type="ChEBI" id="CHEBI:15377"/>
        <dbReference type="ChEBI" id="CHEBI:58289"/>
        <dbReference type="ChEBI" id="CHEBI:58702"/>
        <dbReference type="EC" id="4.2.1.11"/>
    </reaction>
</comment>
<comment type="cofactor">
    <cofactor evidence="1">
        <name>Mg(2+)</name>
        <dbReference type="ChEBI" id="CHEBI:18420"/>
    </cofactor>
    <text evidence="1">Binds a second Mg(2+) ion via substrate during catalysis.</text>
</comment>
<comment type="pathway">
    <text evidence="1">Carbohydrate degradation; glycolysis; pyruvate from D-glyceraldehyde 3-phosphate: step 4/5.</text>
</comment>
<comment type="subcellular location">
    <subcellularLocation>
        <location evidence="1">Cytoplasm</location>
    </subcellularLocation>
    <subcellularLocation>
        <location evidence="1">Secreted</location>
    </subcellularLocation>
    <subcellularLocation>
        <location evidence="1">Cell surface</location>
    </subcellularLocation>
    <text evidence="1">Fractions of enolase are present in both the cytoplasm and on the cell surface.</text>
</comment>
<comment type="similarity">
    <text evidence="1">Belongs to the enolase family.</text>
</comment>
<name>ENO_STAA2</name>
<accession>A6TZQ5</accession>
<sequence length="434" mass="47117">MPIITDVYAREVLDSRGNPTVEVEVLTESGAFGRALVPSGASTGEHEAVELRDGDKSRYLGKGVTKAVENVNEIIAPEIIEGEFSVLDQVSIDKMMIALDGTPNKGKLGANAILGVSIAVARAAADLLGQPLYKYLGGFNGKQLPVPMMNIVNGGSHSDAPIAFQEFMILPVGATTFKESLRWGTEIFHNLKSILSKRGLETAVGDEGGFAPKFEGTEDAVETIIQAIEAAGYKPGEEVFLGFDCASSEFYENGVYDYSKFEGEHGAKRTAAEQVDYLEQLVDKYPIITIEDGMDENDWDGWKQLTERIGDRVQLVGDDLFVTNTEILAKGIENGIGNSILIKVNQIGTLTETFDAIEMAQKAGYTAVVSHRSGETEDTTIADIAVATNAGQIKTGSLSRTDRIAKYNQLLRIEDELFETAKYDGIKSFYNLDK</sequence>
<evidence type="ECO:0000255" key="1">
    <source>
        <dbReference type="HAMAP-Rule" id="MF_00318"/>
    </source>
</evidence>
<gene>
    <name evidence="1" type="primary">eno</name>
    <name type="ordered locus">SaurJH1_0817</name>
</gene>
<keyword id="KW-0963">Cytoplasm</keyword>
<keyword id="KW-0324">Glycolysis</keyword>
<keyword id="KW-0456">Lyase</keyword>
<keyword id="KW-0460">Magnesium</keyword>
<keyword id="KW-0479">Metal-binding</keyword>
<keyword id="KW-0964">Secreted</keyword>
<feature type="chain" id="PRO_1000079155" description="Enolase">
    <location>
        <begin position="1"/>
        <end position="434"/>
    </location>
</feature>
<feature type="active site" description="Proton donor" evidence="1">
    <location>
        <position position="207"/>
    </location>
</feature>
<feature type="active site" description="Proton acceptor" evidence="1">
    <location>
        <position position="343"/>
    </location>
</feature>
<feature type="binding site" evidence="1">
    <location>
        <position position="165"/>
    </location>
    <ligand>
        <name>(2R)-2-phosphoglycerate</name>
        <dbReference type="ChEBI" id="CHEBI:58289"/>
    </ligand>
</feature>
<feature type="binding site" evidence="1">
    <location>
        <position position="244"/>
    </location>
    <ligand>
        <name>Mg(2+)</name>
        <dbReference type="ChEBI" id="CHEBI:18420"/>
    </ligand>
</feature>
<feature type="binding site" evidence="1">
    <location>
        <position position="291"/>
    </location>
    <ligand>
        <name>Mg(2+)</name>
        <dbReference type="ChEBI" id="CHEBI:18420"/>
    </ligand>
</feature>
<feature type="binding site" evidence="1">
    <location>
        <position position="318"/>
    </location>
    <ligand>
        <name>Mg(2+)</name>
        <dbReference type="ChEBI" id="CHEBI:18420"/>
    </ligand>
</feature>
<feature type="binding site" evidence="1">
    <location>
        <position position="343"/>
    </location>
    <ligand>
        <name>(2R)-2-phosphoglycerate</name>
        <dbReference type="ChEBI" id="CHEBI:58289"/>
    </ligand>
</feature>
<feature type="binding site" evidence="1">
    <location>
        <position position="372"/>
    </location>
    <ligand>
        <name>(2R)-2-phosphoglycerate</name>
        <dbReference type="ChEBI" id="CHEBI:58289"/>
    </ligand>
</feature>
<feature type="binding site" evidence="1">
    <location>
        <position position="373"/>
    </location>
    <ligand>
        <name>(2R)-2-phosphoglycerate</name>
        <dbReference type="ChEBI" id="CHEBI:58289"/>
    </ligand>
</feature>
<feature type="binding site" evidence="1">
    <location>
        <position position="394"/>
    </location>
    <ligand>
        <name>(2R)-2-phosphoglycerate</name>
        <dbReference type="ChEBI" id="CHEBI:58289"/>
    </ligand>
</feature>
<dbReference type="EC" id="4.2.1.11" evidence="1"/>
<dbReference type="EMBL" id="CP000736">
    <property type="protein sequence ID" value="ABR51673.1"/>
    <property type="molecule type" value="Genomic_DNA"/>
</dbReference>
<dbReference type="SMR" id="A6TZQ5"/>
<dbReference type="KEGG" id="sah:SaurJH1_0817"/>
<dbReference type="HOGENOM" id="CLU_031223_2_1_9"/>
<dbReference type="UniPathway" id="UPA00109">
    <property type="reaction ID" value="UER00187"/>
</dbReference>
<dbReference type="GO" id="GO:0009986">
    <property type="term" value="C:cell surface"/>
    <property type="evidence" value="ECO:0007669"/>
    <property type="project" value="UniProtKB-SubCell"/>
</dbReference>
<dbReference type="GO" id="GO:0005576">
    <property type="term" value="C:extracellular region"/>
    <property type="evidence" value="ECO:0007669"/>
    <property type="project" value="UniProtKB-SubCell"/>
</dbReference>
<dbReference type="GO" id="GO:0000015">
    <property type="term" value="C:phosphopyruvate hydratase complex"/>
    <property type="evidence" value="ECO:0007669"/>
    <property type="project" value="InterPro"/>
</dbReference>
<dbReference type="GO" id="GO:0000287">
    <property type="term" value="F:magnesium ion binding"/>
    <property type="evidence" value="ECO:0007669"/>
    <property type="project" value="UniProtKB-UniRule"/>
</dbReference>
<dbReference type="GO" id="GO:0004634">
    <property type="term" value="F:phosphopyruvate hydratase activity"/>
    <property type="evidence" value="ECO:0007669"/>
    <property type="project" value="UniProtKB-UniRule"/>
</dbReference>
<dbReference type="GO" id="GO:0006096">
    <property type="term" value="P:glycolytic process"/>
    <property type="evidence" value="ECO:0007669"/>
    <property type="project" value="UniProtKB-UniRule"/>
</dbReference>
<dbReference type="CDD" id="cd03313">
    <property type="entry name" value="enolase"/>
    <property type="match status" value="1"/>
</dbReference>
<dbReference type="FunFam" id="3.20.20.120:FF:000001">
    <property type="entry name" value="Enolase"/>
    <property type="match status" value="1"/>
</dbReference>
<dbReference type="FunFam" id="3.30.390.10:FF:000001">
    <property type="entry name" value="Enolase"/>
    <property type="match status" value="1"/>
</dbReference>
<dbReference type="Gene3D" id="3.20.20.120">
    <property type="entry name" value="Enolase-like C-terminal domain"/>
    <property type="match status" value="1"/>
</dbReference>
<dbReference type="Gene3D" id="3.30.390.10">
    <property type="entry name" value="Enolase-like, N-terminal domain"/>
    <property type="match status" value="1"/>
</dbReference>
<dbReference type="HAMAP" id="MF_00318">
    <property type="entry name" value="Enolase"/>
    <property type="match status" value="1"/>
</dbReference>
<dbReference type="InterPro" id="IPR000941">
    <property type="entry name" value="Enolase"/>
</dbReference>
<dbReference type="InterPro" id="IPR036849">
    <property type="entry name" value="Enolase-like_C_sf"/>
</dbReference>
<dbReference type="InterPro" id="IPR029017">
    <property type="entry name" value="Enolase-like_N"/>
</dbReference>
<dbReference type="InterPro" id="IPR020810">
    <property type="entry name" value="Enolase_C"/>
</dbReference>
<dbReference type="InterPro" id="IPR020809">
    <property type="entry name" value="Enolase_CS"/>
</dbReference>
<dbReference type="InterPro" id="IPR020811">
    <property type="entry name" value="Enolase_N"/>
</dbReference>
<dbReference type="NCBIfam" id="TIGR01060">
    <property type="entry name" value="eno"/>
    <property type="match status" value="1"/>
</dbReference>
<dbReference type="PANTHER" id="PTHR11902">
    <property type="entry name" value="ENOLASE"/>
    <property type="match status" value="1"/>
</dbReference>
<dbReference type="PANTHER" id="PTHR11902:SF1">
    <property type="entry name" value="ENOLASE"/>
    <property type="match status" value="1"/>
</dbReference>
<dbReference type="Pfam" id="PF00113">
    <property type="entry name" value="Enolase_C"/>
    <property type="match status" value="1"/>
</dbReference>
<dbReference type="Pfam" id="PF03952">
    <property type="entry name" value="Enolase_N"/>
    <property type="match status" value="1"/>
</dbReference>
<dbReference type="PIRSF" id="PIRSF001400">
    <property type="entry name" value="Enolase"/>
    <property type="match status" value="1"/>
</dbReference>
<dbReference type="PRINTS" id="PR00148">
    <property type="entry name" value="ENOLASE"/>
</dbReference>
<dbReference type="SFLD" id="SFLDF00002">
    <property type="entry name" value="enolase"/>
    <property type="match status" value="1"/>
</dbReference>
<dbReference type="SFLD" id="SFLDG00178">
    <property type="entry name" value="enolase"/>
    <property type="match status" value="1"/>
</dbReference>
<dbReference type="SMART" id="SM01192">
    <property type="entry name" value="Enolase_C"/>
    <property type="match status" value="1"/>
</dbReference>
<dbReference type="SMART" id="SM01193">
    <property type="entry name" value="Enolase_N"/>
    <property type="match status" value="1"/>
</dbReference>
<dbReference type="SUPFAM" id="SSF51604">
    <property type="entry name" value="Enolase C-terminal domain-like"/>
    <property type="match status" value="1"/>
</dbReference>
<dbReference type="SUPFAM" id="SSF54826">
    <property type="entry name" value="Enolase N-terminal domain-like"/>
    <property type="match status" value="1"/>
</dbReference>
<dbReference type="PROSITE" id="PS00164">
    <property type="entry name" value="ENOLASE"/>
    <property type="match status" value="1"/>
</dbReference>